<feature type="chain" id="PRO_0000204628" description="Nuclear transcription factor Y subunit B-3">
    <location>
        <begin position="1"/>
        <end position="185"/>
    </location>
</feature>
<feature type="DNA-binding region" evidence="1">
    <location>
        <begin position="43"/>
        <end position="49"/>
    </location>
</feature>
<feature type="region of interest" description="Disordered" evidence="2">
    <location>
        <begin position="1"/>
        <end position="39"/>
    </location>
</feature>
<feature type="region of interest" description="Subunit association domain (SAD)" evidence="1">
    <location>
        <begin position="70"/>
        <end position="81"/>
    </location>
</feature>
<feature type="region of interest" description="Disordered" evidence="2">
    <location>
        <begin position="145"/>
        <end position="164"/>
    </location>
</feature>
<feature type="compositionally biased region" description="Gly residues" evidence="2">
    <location>
        <begin position="1"/>
        <end position="36"/>
    </location>
</feature>
<feature type="compositionally biased region" description="Low complexity" evidence="2">
    <location>
        <begin position="153"/>
        <end position="164"/>
    </location>
</feature>
<feature type="sequence conflict" description="In Ref. 5; BAC76332." evidence="4" ref="5">
    <original>SHESGSPRGGGGG</original>
    <variation>RWSATRP</variation>
    <location>
        <begin position="14"/>
        <end position="26"/>
    </location>
</feature>
<feature type="sequence conflict" description="In Ref. 6; AAO72650." evidence="4" ref="6">
    <original>G</original>
    <variation>W</variation>
    <location>
        <position position="26"/>
    </location>
</feature>
<feature type="sequence conflict" description="In Ref. 6; AAO72650." evidence="4" ref="6">
    <original>GGGGGGGVREQDRF</original>
    <variation>EGAGQV</variation>
    <location>
        <begin position="29"/>
        <end position="42"/>
    </location>
</feature>
<feature type="sequence conflict" description="In Ref. 1." evidence="4" ref="1">
    <original>ME</original>
    <variation>VD</variation>
    <location>
        <begin position="128"/>
        <end position="129"/>
    </location>
</feature>
<gene>
    <name type="primary">NFYB3</name>
    <name type="synonym">HAP3B</name>
    <name type="ordered locus">Os05g0573500</name>
    <name type="ordered locus">LOC_Os05g49780</name>
    <name type="ORF">OJ1280_A04.9</name>
</gene>
<evidence type="ECO:0000250" key="1"/>
<evidence type="ECO:0000256" key="2">
    <source>
        <dbReference type="SAM" id="MobiDB-lite"/>
    </source>
</evidence>
<evidence type="ECO:0000269" key="3">
    <source>
    </source>
</evidence>
<evidence type="ECO:0000305" key="4"/>
<comment type="function">
    <text evidence="3">Component of the NF-Y/HAP transcription factor complex. The NF-Y complex stimulates the transcription of various genes by recognizing and binding to a CCAAT motif in promoters. May regulate the expression of photosynthetic genes, and may be involved in chloroplast and amyloplast development.</text>
</comment>
<comment type="subunit">
    <text evidence="1">Heterotrimeric transcription factor composed of three components, NF-YA, NF-YB and NF-YC. NF-YB and NF-YC must interact and dimerize for NF-YA association and DNA binding (By similarity).</text>
</comment>
<comment type="subcellular location">
    <subcellularLocation>
        <location evidence="4">Nucleus</location>
    </subcellularLocation>
</comment>
<comment type="tissue specificity">
    <text evidence="3">Ubiquitous.</text>
</comment>
<comment type="similarity">
    <text evidence="4">Belongs to the NFYB/HAP3 subunit family.</text>
</comment>
<comment type="sequence caution" evidence="4">
    <conflict type="erroneous gene model prediction">
        <sequence resource="EMBL-CDS" id="AAU90178"/>
    </conflict>
</comment>
<keyword id="KW-0010">Activator</keyword>
<keyword id="KW-0238">DNA-binding</keyword>
<keyword id="KW-0539">Nucleus</keyword>
<keyword id="KW-1185">Reference proteome</keyword>
<keyword id="KW-0804">Transcription</keyword>
<keyword id="KW-0805">Transcription regulation</keyword>
<proteinExistence type="evidence at protein level"/>
<sequence length="185" mass="19180">MADGPGSPGGGGGSHESGSPRGGGGGGGGGGGGGGVREQDRFLPIANISRIMKKAIPANGKIAKDAKETVQECVSEFISFITSEASDKCQREKRKTINGDDLLWAMATLGFEDYIEPLKVYLQKYREMEGDSKLTAKAGDGSVKKDVLGSHGGSSSSAQGMGQQAAYNQGMGYMQPQYHNGDVSN</sequence>
<dbReference type="EMBL" id="AC108500">
    <property type="protein sequence ID" value="AAU90178.1"/>
    <property type="status" value="ALT_SEQ"/>
    <property type="molecule type" value="Genomic_DNA"/>
</dbReference>
<dbReference type="EMBL" id="AP014961">
    <property type="status" value="NOT_ANNOTATED_CDS"/>
    <property type="molecule type" value="Genomic_DNA"/>
</dbReference>
<dbReference type="EMBL" id="AK100811">
    <property type="status" value="NOT_ANNOTATED_CDS"/>
    <property type="molecule type" value="mRNA"/>
</dbReference>
<dbReference type="EMBL" id="AB095439">
    <property type="protein sequence ID" value="BAC76332.1"/>
    <property type="molecule type" value="mRNA"/>
</dbReference>
<dbReference type="EMBL" id="AY224530">
    <property type="protein sequence ID" value="AAO72650.1"/>
    <property type="molecule type" value="mRNA"/>
</dbReference>
<dbReference type="RefSeq" id="XP_015639303.1">
    <property type="nucleotide sequence ID" value="XM_015783817.1"/>
</dbReference>
<dbReference type="RefSeq" id="XP_015639304.1">
    <property type="nucleotide sequence ID" value="XM_015783818.1"/>
</dbReference>
<dbReference type="RefSeq" id="XP_015639305.1">
    <property type="nucleotide sequence ID" value="XM_015783819.1"/>
</dbReference>
<dbReference type="SMR" id="Q60EQ4"/>
<dbReference type="FunCoup" id="Q60EQ4">
    <property type="interactions" value="1338"/>
</dbReference>
<dbReference type="STRING" id="39947.Q60EQ4"/>
<dbReference type="PaxDb" id="39947-Q60EQ4"/>
<dbReference type="EnsemblPlants" id="Os05t0463800-02">
    <property type="protein sequence ID" value="Os05t0463800-02"/>
    <property type="gene ID" value="Os05g0463800"/>
</dbReference>
<dbReference type="GeneID" id="9268669"/>
<dbReference type="Gramene" id="Os05t0463800-02">
    <property type="protein sequence ID" value="Os05t0463800-02"/>
    <property type="gene ID" value="Os05g0463800"/>
</dbReference>
<dbReference type="KEGG" id="osa:9268669"/>
<dbReference type="eggNOG" id="KOG0869">
    <property type="taxonomic scope" value="Eukaryota"/>
</dbReference>
<dbReference type="HOGENOM" id="CLU_066247_12_3_1"/>
<dbReference type="InParanoid" id="Q60EQ4"/>
<dbReference type="OrthoDB" id="386949at2759"/>
<dbReference type="Proteomes" id="UP000000763">
    <property type="component" value="Chromosome 5"/>
</dbReference>
<dbReference type="Proteomes" id="UP000059680">
    <property type="component" value="Chromosome 5"/>
</dbReference>
<dbReference type="ExpressionAtlas" id="Q60EQ4">
    <property type="expression patterns" value="baseline and differential"/>
</dbReference>
<dbReference type="GO" id="GO:0016602">
    <property type="term" value="C:CCAAT-binding factor complex"/>
    <property type="evidence" value="ECO:0000318"/>
    <property type="project" value="GO_Central"/>
</dbReference>
<dbReference type="GO" id="GO:0001228">
    <property type="term" value="F:DNA-binding transcription activator activity, RNA polymerase II-specific"/>
    <property type="evidence" value="ECO:0007669"/>
    <property type="project" value="InterPro"/>
</dbReference>
<dbReference type="GO" id="GO:0000981">
    <property type="term" value="F:DNA-binding transcription factor activity, RNA polymerase II-specific"/>
    <property type="evidence" value="ECO:0000318"/>
    <property type="project" value="GO_Central"/>
</dbReference>
<dbReference type="GO" id="GO:0046982">
    <property type="term" value="F:protein heterodimerization activity"/>
    <property type="evidence" value="ECO:0007669"/>
    <property type="project" value="InterPro"/>
</dbReference>
<dbReference type="GO" id="GO:0043565">
    <property type="term" value="F:sequence-specific DNA binding"/>
    <property type="evidence" value="ECO:0007669"/>
    <property type="project" value="InterPro"/>
</dbReference>
<dbReference type="GO" id="GO:0006357">
    <property type="term" value="P:regulation of transcription by RNA polymerase II"/>
    <property type="evidence" value="ECO:0000318"/>
    <property type="project" value="GO_Central"/>
</dbReference>
<dbReference type="CDD" id="cd22907">
    <property type="entry name" value="HFD_NFYB"/>
    <property type="match status" value="1"/>
</dbReference>
<dbReference type="FunFam" id="1.10.20.10:FF:000035">
    <property type="entry name" value="Nuclear transcription factor Y subunit B-3"/>
    <property type="match status" value="1"/>
</dbReference>
<dbReference type="Gene3D" id="1.10.20.10">
    <property type="entry name" value="Histone, subunit A"/>
    <property type="match status" value="1"/>
</dbReference>
<dbReference type="InterPro" id="IPR003958">
    <property type="entry name" value="CBFA_NFYB_domain"/>
</dbReference>
<dbReference type="InterPro" id="IPR009072">
    <property type="entry name" value="Histone-fold"/>
</dbReference>
<dbReference type="InterPro" id="IPR027113">
    <property type="entry name" value="Transc_fact_NFYB/HAP3"/>
</dbReference>
<dbReference type="InterPro" id="IPR003956">
    <property type="entry name" value="Transcrpt_fac_NFYB/HAP3_CS"/>
</dbReference>
<dbReference type="PANTHER" id="PTHR11064">
    <property type="entry name" value="CCAAT-BINDING TRANSCRIPTION FACTOR-RELATED"/>
    <property type="match status" value="1"/>
</dbReference>
<dbReference type="PANTHER" id="PTHR11064:SF193">
    <property type="entry name" value="NUCLEAR TRANSCRIPTION FACTOR Y SUBUNIT B-3"/>
    <property type="match status" value="1"/>
</dbReference>
<dbReference type="Pfam" id="PF00808">
    <property type="entry name" value="CBFD_NFYB_HMF"/>
    <property type="match status" value="1"/>
</dbReference>
<dbReference type="PRINTS" id="PR00615">
    <property type="entry name" value="CCAATSUBUNTA"/>
</dbReference>
<dbReference type="SUPFAM" id="SSF47113">
    <property type="entry name" value="Histone-fold"/>
    <property type="match status" value="1"/>
</dbReference>
<dbReference type="PROSITE" id="PS00685">
    <property type="entry name" value="NFYB_HAP3"/>
    <property type="match status" value="1"/>
</dbReference>
<accession>Q60EQ4</accession>
<accession>Q84NF0</accession>
<accession>Q84VF3</accession>
<reference key="1">
    <citation type="journal article" date="2005" name="Mol. Genet. Genomics">
        <title>A fine physical map of the rice chromosome 5.</title>
        <authorList>
            <person name="Cheng C.-H."/>
            <person name="Chung M.C."/>
            <person name="Liu S.-M."/>
            <person name="Chen S.-K."/>
            <person name="Kao F.Y."/>
            <person name="Lin S.-J."/>
            <person name="Hsiao S.-H."/>
            <person name="Tseng I.C."/>
            <person name="Hsing Y.-I.C."/>
            <person name="Wu H.-P."/>
            <person name="Chen C.-S."/>
            <person name="Shaw J.-F."/>
            <person name="Wu J."/>
            <person name="Matsumoto T."/>
            <person name="Sasaki T."/>
            <person name="Chen H.-C."/>
            <person name="Chow T.-Y."/>
        </authorList>
    </citation>
    <scope>NUCLEOTIDE SEQUENCE [LARGE SCALE GENOMIC DNA]</scope>
    <source>
        <strain>cv. Nipponbare</strain>
    </source>
</reference>
<reference key="2">
    <citation type="journal article" date="2005" name="Nature">
        <title>The map-based sequence of the rice genome.</title>
        <authorList>
            <consortium name="International rice genome sequencing project (IRGSP)"/>
        </authorList>
    </citation>
    <scope>NUCLEOTIDE SEQUENCE [LARGE SCALE GENOMIC DNA]</scope>
    <source>
        <strain>cv. Nipponbare</strain>
    </source>
</reference>
<reference key="3">
    <citation type="journal article" date="2013" name="Rice">
        <title>Improvement of the Oryza sativa Nipponbare reference genome using next generation sequence and optical map data.</title>
        <authorList>
            <person name="Kawahara Y."/>
            <person name="de la Bastide M."/>
            <person name="Hamilton J.P."/>
            <person name="Kanamori H."/>
            <person name="McCombie W.R."/>
            <person name="Ouyang S."/>
            <person name="Schwartz D.C."/>
            <person name="Tanaka T."/>
            <person name="Wu J."/>
            <person name="Zhou S."/>
            <person name="Childs K.L."/>
            <person name="Davidson R.M."/>
            <person name="Lin H."/>
            <person name="Quesada-Ocampo L."/>
            <person name="Vaillancourt B."/>
            <person name="Sakai H."/>
            <person name="Lee S.S."/>
            <person name="Kim J."/>
            <person name="Numa H."/>
            <person name="Itoh T."/>
            <person name="Buell C.R."/>
            <person name="Matsumoto T."/>
        </authorList>
    </citation>
    <scope>GENOME REANNOTATION</scope>
    <source>
        <strain>cv. Nipponbare</strain>
    </source>
</reference>
<reference key="4">
    <citation type="journal article" date="2003" name="Science">
        <title>Collection, mapping, and annotation of over 28,000 cDNA clones from japonica rice.</title>
        <authorList>
            <consortium name="The rice full-length cDNA consortium"/>
        </authorList>
    </citation>
    <scope>NUCLEOTIDE SEQUENCE [LARGE SCALE MRNA]</scope>
    <source>
        <strain>cv. Nipponbare</strain>
    </source>
</reference>
<reference key="5">
    <citation type="journal article" date="2003" name="Plant J.">
        <title>OsHAP3 genes regulate chloroplast biogenesis in rice.</title>
        <authorList>
            <person name="Miyoshi K."/>
            <person name="Ito Y."/>
            <person name="Serizawa A."/>
            <person name="Kurata N."/>
        </authorList>
    </citation>
    <scope>NUCLEOTIDE SEQUENCE [MRNA] OF 13-185</scope>
    <scope>FUNCTION</scope>
    <scope>TISSUE SPECIFICITY</scope>
    <source>
        <strain>cv. Nipponbare</strain>
    </source>
</reference>
<reference key="6">
    <citation type="journal article" date="2003" name="Plant Mol. Biol.">
        <title>Identification of rice (Oryza sativa) proteins linked to the cyclin-mediated regulation of the cell cycle.</title>
        <authorList>
            <person name="Cooper B."/>
            <person name="Hutchison D."/>
            <person name="Park S."/>
            <person name="Guimil S."/>
            <person name="Luginbuehl P."/>
            <person name="Ellero C."/>
            <person name="Goff S.A."/>
            <person name="Glazebrook J."/>
        </authorList>
    </citation>
    <scope>NUCLEOTIDE SEQUENCE [MRNA] OF 26-185</scope>
    <scope>INTERACTION WITH NDPK1</scope>
    <source>
        <strain>cv. Nipponbare</strain>
    </source>
</reference>
<name>NFYB3_ORYSJ</name>
<protein>
    <recommendedName>
        <fullName>Nuclear transcription factor Y subunit B-3</fullName>
    </recommendedName>
    <alternativeName>
        <fullName>OsNF-YB-3</fullName>
    </alternativeName>
    <alternativeName>
        <fullName>Transcriptional activator HAP3B</fullName>
    </alternativeName>
</protein>
<organism>
    <name type="scientific">Oryza sativa subsp. japonica</name>
    <name type="common">Rice</name>
    <dbReference type="NCBI Taxonomy" id="39947"/>
    <lineage>
        <taxon>Eukaryota</taxon>
        <taxon>Viridiplantae</taxon>
        <taxon>Streptophyta</taxon>
        <taxon>Embryophyta</taxon>
        <taxon>Tracheophyta</taxon>
        <taxon>Spermatophyta</taxon>
        <taxon>Magnoliopsida</taxon>
        <taxon>Liliopsida</taxon>
        <taxon>Poales</taxon>
        <taxon>Poaceae</taxon>
        <taxon>BOP clade</taxon>
        <taxon>Oryzoideae</taxon>
        <taxon>Oryzeae</taxon>
        <taxon>Oryzinae</taxon>
        <taxon>Oryza</taxon>
        <taxon>Oryza sativa</taxon>
    </lineage>
</organism>